<comment type="function">
    <text evidence="1">GTPase that associates with pre-60S ribosomal subunits in the nucleolus and is required for their nuclear export and maturation.</text>
</comment>
<comment type="subcellular location">
    <subcellularLocation>
        <location evidence="1">Nucleus</location>
        <location evidence="1">Nucleolus</location>
    </subcellularLocation>
</comment>
<comment type="similarity">
    <text evidence="3">Belongs to the TRAFAC class YlqF/YawG GTPase family. NOG2 subfamily.</text>
</comment>
<evidence type="ECO:0000250" key="1"/>
<evidence type="ECO:0000255" key="2"/>
<evidence type="ECO:0000255" key="3">
    <source>
        <dbReference type="PROSITE-ProRule" id="PRU01058"/>
    </source>
</evidence>
<evidence type="ECO:0000256" key="4">
    <source>
        <dbReference type="SAM" id="MobiDB-lite"/>
    </source>
</evidence>
<organism>
    <name type="scientific">Candida glabrata (strain ATCC 2001 / BCRC 20586 / JCM 3761 / NBRC 0622 / NRRL Y-65 / CBS 138)</name>
    <name type="common">Yeast</name>
    <name type="synonym">Nakaseomyces glabratus</name>
    <dbReference type="NCBI Taxonomy" id="284593"/>
    <lineage>
        <taxon>Eukaryota</taxon>
        <taxon>Fungi</taxon>
        <taxon>Dikarya</taxon>
        <taxon>Ascomycota</taxon>
        <taxon>Saccharomycotina</taxon>
        <taxon>Saccharomycetes</taxon>
        <taxon>Saccharomycetales</taxon>
        <taxon>Saccharomycetaceae</taxon>
        <taxon>Nakaseomyces</taxon>
    </lineage>
</organism>
<reference key="1">
    <citation type="journal article" date="2004" name="Nature">
        <title>Genome evolution in yeasts.</title>
        <authorList>
            <person name="Dujon B."/>
            <person name="Sherman D."/>
            <person name="Fischer G."/>
            <person name="Durrens P."/>
            <person name="Casaregola S."/>
            <person name="Lafontaine I."/>
            <person name="de Montigny J."/>
            <person name="Marck C."/>
            <person name="Neuveglise C."/>
            <person name="Talla E."/>
            <person name="Goffard N."/>
            <person name="Frangeul L."/>
            <person name="Aigle M."/>
            <person name="Anthouard V."/>
            <person name="Babour A."/>
            <person name="Barbe V."/>
            <person name="Barnay S."/>
            <person name="Blanchin S."/>
            <person name="Beckerich J.-M."/>
            <person name="Beyne E."/>
            <person name="Bleykasten C."/>
            <person name="Boisrame A."/>
            <person name="Boyer J."/>
            <person name="Cattolico L."/>
            <person name="Confanioleri F."/>
            <person name="de Daruvar A."/>
            <person name="Despons L."/>
            <person name="Fabre E."/>
            <person name="Fairhead C."/>
            <person name="Ferry-Dumazet H."/>
            <person name="Groppi A."/>
            <person name="Hantraye F."/>
            <person name="Hennequin C."/>
            <person name="Jauniaux N."/>
            <person name="Joyet P."/>
            <person name="Kachouri R."/>
            <person name="Kerrest A."/>
            <person name="Koszul R."/>
            <person name="Lemaire M."/>
            <person name="Lesur I."/>
            <person name="Ma L."/>
            <person name="Muller H."/>
            <person name="Nicaud J.-M."/>
            <person name="Nikolski M."/>
            <person name="Oztas S."/>
            <person name="Ozier-Kalogeropoulos O."/>
            <person name="Pellenz S."/>
            <person name="Potier S."/>
            <person name="Richard G.-F."/>
            <person name="Straub M.-L."/>
            <person name="Suleau A."/>
            <person name="Swennen D."/>
            <person name="Tekaia F."/>
            <person name="Wesolowski-Louvel M."/>
            <person name="Westhof E."/>
            <person name="Wirth B."/>
            <person name="Zeniou-Meyer M."/>
            <person name="Zivanovic Y."/>
            <person name="Bolotin-Fukuhara M."/>
            <person name="Thierry A."/>
            <person name="Bouchier C."/>
            <person name="Caudron B."/>
            <person name="Scarpelli C."/>
            <person name="Gaillardin C."/>
            <person name="Weissenbach J."/>
            <person name="Wincker P."/>
            <person name="Souciet J.-L."/>
        </authorList>
    </citation>
    <scope>NUCLEOTIDE SEQUENCE [LARGE SCALE GENOMIC DNA]</scope>
    <source>
        <strain>ATCC 2001 / BCRC 20586 / JCM 3761 / NBRC 0622 / NRRL Y-65 / CBS 138</strain>
    </source>
</reference>
<keyword id="KW-0342">GTP-binding</keyword>
<keyword id="KW-0547">Nucleotide-binding</keyword>
<keyword id="KW-0539">Nucleus</keyword>
<keyword id="KW-1185">Reference proteome</keyword>
<keyword id="KW-0690">Ribosome biogenesis</keyword>
<sequence>MGTGKKEKQRRIREGTTKDGNIRVKGENFYRDSKRVQFLNMYKSGKAIKNKHGDVIRAADYQDTTIPDARVQPDRRWFGNTRVISQDALQHFRDALGETQKDTYQVLLRRNKLPMSLLDEKDSTESPRARILETESFDQTFGPKAQRKKPRVAASSLEELVQATEEENKTYEEKEELKATLGLMGKQEDEENGWTQVTKEAIFSKGQSKRIWNELYKVIDSSDVVIHVLDARDPLGTRCKSVEEYMKKETPHKHLIYVLNKCDLVPTWVAAAWVKHLSKDRPTLAFHASITNSFGKGSLIQLLRQFSQLHTDRKQISVGFIGYPNTGKSSIINTLRKKKVCQVAPIPGETKVWQYITLMKRIFLIDCPGIVPPSTKDSEEDILFRGVVRVEHVSHPEQYIPGVLKRCQTKHLERTYEISGWKDATDFIEMLARKQGRLLKGGEPDESGVSKQILNDFNRGKIPWFVIPPEKEEDKKRKLDEEEVKSAKMQKVKD</sequence>
<feature type="chain" id="PRO_0000215809" description="Nucleolar GTP-binding protein 2">
    <location>
        <begin position="1"/>
        <end position="494"/>
    </location>
</feature>
<feature type="domain" description="CP-type G" evidence="3">
    <location>
        <begin position="212"/>
        <end position="373"/>
    </location>
</feature>
<feature type="region of interest" description="Disordered" evidence="4">
    <location>
        <begin position="1"/>
        <end position="20"/>
    </location>
</feature>
<feature type="region of interest" description="Disordered" evidence="4">
    <location>
        <begin position="473"/>
        <end position="494"/>
    </location>
</feature>
<feature type="binding site" evidence="2">
    <location>
        <begin position="322"/>
        <end position="329"/>
    </location>
    <ligand>
        <name>GTP</name>
        <dbReference type="ChEBI" id="CHEBI:37565"/>
    </ligand>
</feature>
<feature type="binding site" evidence="2">
    <location>
        <begin position="366"/>
        <end position="370"/>
    </location>
    <ligand>
        <name>GTP</name>
        <dbReference type="ChEBI" id="CHEBI:37565"/>
    </ligand>
</feature>
<name>NOG2_CANGA</name>
<protein>
    <recommendedName>
        <fullName>Nucleolar GTP-binding protein 2</fullName>
    </recommendedName>
</protein>
<accession>Q6FWS1</accession>
<gene>
    <name type="primary">NOG2</name>
    <name type="ordered locus">CAGL0C03369</name>
</gene>
<dbReference type="EMBL" id="CR380949">
    <property type="protein sequence ID" value="CAG58229.1"/>
    <property type="molecule type" value="Genomic_DNA"/>
</dbReference>
<dbReference type="RefSeq" id="XP_445323.1">
    <property type="nucleotide sequence ID" value="XM_445323.1"/>
</dbReference>
<dbReference type="SMR" id="Q6FWS1"/>
<dbReference type="FunCoup" id="Q6FWS1">
    <property type="interactions" value="971"/>
</dbReference>
<dbReference type="STRING" id="284593.Q6FWS1"/>
<dbReference type="EnsemblFungi" id="CAGL0C03369g-T">
    <property type="protein sequence ID" value="CAGL0C03369g-T-p1"/>
    <property type="gene ID" value="CAGL0C03369g"/>
</dbReference>
<dbReference type="KEGG" id="cgr:2886741"/>
<dbReference type="CGD" id="CAL0127296">
    <property type="gene designation" value="CAGL0C03369g"/>
</dbReference>
<dbReference type="VEuPathDB" id="FungiDB:B1J91_C03369g"/>
<dbReference type="VEuPathDB" id="FungiDB:CAGL0C03369g"/>
<dbReference type="eggNOG" id="KOG2423">
    <property type="taxonomic scope" value="Eukaryota"/>
</dbReference>
<dbReference type="HOGENOM" id="CLU_011106_4_0_1"/>
<dbReference type="InParanoid" id="Q6FWS1"/>
<dbReference type="OMA" id="RTQGFNH"/>
<dbReference type="Proteomes" id="UP000002428">
    <property type="component" value="Chromosome C"/>
</dbReference>
<dbReference type="GO" id="GO:0005730">
    <property type="term" value="C:nucleolus"/>
    <property type="evidence" value="ECO:0007669"/>
    <property type="project" value="UniProtKB-SubCell"/>
</dbReference>
<dbReference type="GO" id="GO:0005654">
    <property type="term" value="C:nucleoplasm"/>
    <property type="evidence" value="ECO:0007669"/>
    <property type="project" value="EnsemblFungi"/>
</dbReference>
<dbReference type="GO" id="GO:0030687">
    <property type="term" value="C:preribosome, large subunit precursor"/>
    <property type="evidence" value="ECO:0007669"/>
    <property type="project" value="EnsemblFungi"/>
</dbReference>
<dbReference type="GO" id="GO:0005525">
    <property type="term" value="F:GTP binding"/>
    <property type="evidence" value="ECO:0007669"/>
    <property type="project" value="UniProtKB-KW"/>
</dbReference>
<dbReference type="GO" id="GO:0070180">
    <property type="term" value="F:large ribosomal subunit rRNA binding"/>
    <property type="evidence" value="ECO:0007669"/>
    <property type="project" value="EnsemblFungi"/>
</dbReference>
<dbReference type="GO" id="GO:2000200">
    <property type="term" value="P:regulation of ribosomal subunit export from nucleus"/>
    <property type="evidence" value="ECO:0007669"/>
    <property type="project" value="EnsemblFungi"/>
</dbReference>
<dbReference type="GO" id="GO:0000055">
    <property type="term" value="P:ribosomal large subunit export from nucleus"/>
    <property type="evidence" value="ECO:0007669"/>
    <property type="project" value="EnsemblFungi"/>
</dbReference>
<dbReference type="CDD" id="cd01858">
    <property type="entry name" value="NGP_1"/>
    <property type="match status" value="1"/>
</dbReference>
<dbReference type="FunFam" id="3.40.50.300:FF:000559">
    <property type="entry name" value="Nuclear/nucleolar GTPase 2"/>
    <property type="match status" value="1"/>
</dbReference>
<dbReference type="FunFam" id="1.10.1580.10:FF:000005">
    <property type="entry name" value="Nucleolar GTP-binding protein 2"/>
    <property type="match status" value="1"/>
</dbReference>
<dbReference type="Gene3D" id="1.10.1580.10">
    <property type="match status" value="1"/>
</dbReference>
<dbReference type="Gene3D" id="3.40.50.300">
    <property type="entry name" value="P-loop containing nucleotide triphosphate hydrolases"/>
    <property type="match status" value="1"/>
</dbReference>
<dbReference type="InterPro" id="IPR030378">
    <property type="entry name" value="G_CP_dom"/>
</dbReference>
<dbReference type="InterPro" id="IPR024929">
    <property type="entry name" value="GNL2_CP_dom"/>
</dbReference>
<dbReference type="InterPro" id="IPR006073">
    <property type="entry name" value="GTP-bd"/>
</dbReference>
<dbReference type="InterPro" id="IPR023179">
    <property type="entry name" value="GTP-bd_ortho_bundle_sf"/>
</dbReference>
<dbReference type="InterPro" id="IPR012971">
    <property type="entry name" value="NOG2_N_dom"/>
</dbReference>
<dbReference type="InterPro" id="IPR027417">
    <property type="entry name" value="P-loop_NTPase"/>
</dbReference>
<dbReference type="InterPro" id="IPR050755">
    <property type="entry name" value="TRAFAC_YlqF/YawG_RiboMat"/>
</dbReference>
<dbReference type="PANTHER" id="PTHR11089">
    <property type="entry name" value="GTP-BINDING PROTEIN-RELATED"/>
    <property type="match status" value="1"/>
</dbReference>
<dbReference type="PANTHER" id="PTHR11089:SF9">
    <property type="entry name" value="NUCLEOLAR GTP-BINDING PROTEIN 2"/>
    <property type="match status" value="1"/>
</dbReference>
<dbReference type="Pfam" id="PF01926">
    <property type="entry name" value="MMR_HSR1"/>
    <property type="match status" value="1"/>
</dbReference>
<dbReference type="Pfam" id="PF08153">
    <property type="entry name" value="NGP1NT"/>
    <property type="match status" value="1"/>
</dbReference>
<dbReference type="PRINTS" id="PR00326">
    <property type="entry name" value="GTP1OBG"/>
</dbReference>
<dbReference type="SUPFAM" id="SSF52540">
    <property type="entry name" value="P-loop containing nucleoside triphosphate hydrolases"/>
    <property type="match status" value="1"/>
</dbReference>
<dbReference type="PROSITE" id="PS51721">
    <property type="entry name" value="G_CP"/>
    <property type="match status" value="1"/>
</dbReference>
<proteinExistence type="inferred from homology"/>